<protein>
    <recommendedName>
        <fullName evidence="3">Acyltransferase drtE</fullName>
        <ecNumber evidence="2">2.3.-.-</ecNumber>
    </recommendedName>
    <alternativeName>
        <fullName evidence="3">Drimane-type sesquiterpene ester biosynthesis cluster protein E</fullName>
    </alternativeName>
    <alternativeName>
        <fullName evidence="4">Polyketide transferase drtE</fullName>
    </alternativeName>
</protein>
<proteinExistence type="evidence at protein level"/>
<reference key="1">
    <citation type="journal article" date="2016" name="Genome Announc.">
        <title>Draft genome sequences of fungus Aspergillus calidoustus.</title>
        <authorList>
            <person name="Horn F."/>
            <person name="Linde J."/>
            <person name="Mattern D.J."/>
            <person name="Walther G."/>
            <person name="Guthke R."/>
            <person name="Scherlach K."/>
            <person name="Martin K."/>
            <person name="Brakhage A.A."/>
            <person name="Petzke L."/>
            <person name="Valiante V."/>
        </authorList>
    </citation>
    <scope>NUCLEOTIDE SEQUENCE [LARGE SCALE GENOMIC DNA]</scope>
    <source>
        <strain>SF006504</strain>
    </source>
</reference>
<reference key="2">
    <citation type="journal article" date="2021" name="Angew. Chem. Int. Ed.">
        <title>Biosynthesis of fungal drimane-type sesquiterpene esters.</title>
        <authorList>
            <person name="Huang Y."/>
            <person name="Hoefgen S."/>
            <person name="Valiante V."/>
        </authorList>
    </citation>
    <scope>FUNCTION</scope>
    <scope>DISRUPTION PHENOTYPE</scope>
    <scope>CATALYTIC ACTIVITY</scope>
    <scope>PATHWAY</scope>
</reference>
<accession>A0A0U5CNN8</accession>
<name>DRTE_ASPCI</name>
<dbReference type="EC" id="2.3.-.-" evidence="2"/>
<dbReference type="EMBL" id="CDMC01000002">
    <property type="protein sequence ID" value="CEN60545.1"/>
    <property type="molecule type" value="Genomic_DNA"/>
</dbReference>
<dbReference type="SMR" id="A0A0U5CNN8"/>
<dbReference type="STRING" id="454130.A0A0U5CNN8"/>
<dbReference type="ESTHER" id="9euro-a0a0u5cnn8">
    <property type="family name" value="Thiohydrolase"/>
</dbReference>
<dbReference type="OMA" id="FMARHPM"/>
<dbReference type="OrthoDB" id="2498029at2759"/>
<dbReference type="UniPathway" id="UPA00213"/>
<dbReference type="Proteomes" id="UP000054771">
    <property type="component" value="Unassembled WGS sequence"/>
</dbReference>
<dbReference type="GO" id="GO:0016740">
    <property type="term" value="F:transferase activity"/>
    <property type="evidence" value="ECO:0007669"/>
    <property type="project" value="UniProtKB-KW"/>
</dbReference>
<dbReference type="GO" id="GO:0016114">
    <property type="term" value="P:terpenoid biosynthetic process"/>
    <property type="evidence" value="ECO:0007669"/>
    <property type="project" value="UniProtKB-UniPathway"/>
</dbReference>
<dbReference type="Gene3D" id="1.10.10.800">
    <property type="match status" value="1"/>
</dbReference>
<dbReference type="Gene3D" id="3.40.50.1820">
    <property type="entry name" value="alpha/beta hydrolase"/>
    <property type="match status" value="1"/>
</dbReference>
<dbReference type="InterPro" id="IPR000073">
    <property type="entry name" value="AB_hydrolase_1"/>
</dbReference>
<dbReference type="InterPro" id="IPR029058">
    <property type="entry name" value="AB_hydrolase_fold"/>
</dbReference>
<dbReference type="InterPro" id="IPR051411">
    <property type="entry name" value="Polyketide_trans_af380"/>
</dbReference>
<dbReference type="PANTHER" id="PTHR47751:SF2">
    <property type="entry name" value="DLTD N-TERMINAL DOMAIN PROTEIN (AFU_ORTHOLOGUE AFUA_8G00380)-RELATED"/>
    <property type="match status" value="1"/>
</dbReference>
<dbReference type="PANTHER" id="PTHR47751">
    <property type="entry name" value="SUPERFAMILY HYDROLASE, PUTATIVE (AFU_ORTHOLOGUE AFUA_2G16580)-RELATED"/>
    <property type="match status" value="1"/>
</dbReference>
<dbReference type="Pfam" id="PF00561">
    <property type="entry name" value="Abhydrolase_1"/>
    <property type="match status" value="1"/>
</dbReference>
<dbReference type="SUPFAM" id="SSF53474">
    <property type="entry name" value="alpha/beta-Hydrolases"/>
    <property type="match status" value="1"/>
</dbReference>
<evidence type="ECO:0000255" key="1"/>
<evidence type="ECO:0000269" key="2">
    <source>
    </source>
</evidence>
<evidence type="ECO:0000303" key="3">
    <source>
    </source>
</evidence>
<evidence type="ECO:0000305" key="4"/>
<comment type="function">
    <text evidence="2">Acyltransferase; part of the gene cluster that mediates the biosynthesis of various drimane-type sesquiterpene esters, compounds that exhibit diverse biological activities and are widely present in eukaryotes (PubMed:34468074). The pathway begins with the synthesis of the backbone drimenol by the terpene cyclase drtB using farnesyl pyrophosphate (FPP) as substrate (PubMed:34468074). The cytochrome P450 monooxygenase drtD is then responsible for the hydroxylations at C-6, C-9 and C-12, as well as the oxidation of hydroxyl groups at C-6 and C-11 to a ketone and an aldehyde, respectively (PubMed:34468074). Then, the biosynthesis can go in two directions, either the hydroxylated drimenol is further hydroxylated at C-2 and C-3 by an enzyme(s) not associated with the drt cluster, or the FAD-binding oxidoreductase drtC further oxidizes C-11 or C-12 to form the butyrolactone ring (PubMed:34468074). DrtB, drtD and drtC are solely responsible for the formation of the different drimane structures observed during drimane sesquiterpenes biosynthesis (PubMed:34468074). The polyketide synthase drtA synthesizes different lengths (C6 and C8) of PKS chains, which are then oxidized to varying degrees by the short-chain dehydrogenase drtF (PubMed:34468074). Finally, these PKS chains are transferred onto drimane sesquiterpenes by the acyltransferase drtE, forming the sesquiterpene esters (PubMed:34468074). In addition to the different fatty acyl-CoA chains produced by drtA, drtE is also able to use cinnamoyl-CoA as a substrate (PubMed:34468074).</text>
</comment>
<comment type="pathway">
    <text evidence="2">Secondary metabolite biosynthesis; terpenoid biosynthesis.</text>
</comment>
<comment type="disruption phenotype">
    <text evidence="2">Abolishes the production of all the sesquiterpene ester compounds.</text>
</comment>
<comment type="miscellaneous">
    <text evidence="2">The various drimane-type sesquiterpene esters produced by the A.calidoustus drt cluster include asperiene C, asperiene A, (6-Strobilactone-B) ester of (E,E)-6-carbonyl-7-hydroxy-2,4-octadienoic acid, ustusolate A, ustusolate C, ustusolide E, ustusoic acid A, (2'E,4'E)-6-(1'-carboxyhexa-2',4',-diene)-9-hydroxy-drim-7-ene-11,12-olide, RES-1149-2, as well as the 3 newly identified compounds calidoustene A, calidoustene B and calidoustene C.</text>
</comment>
<comment type="similarity">
    <text evidence="4">Belongs to the polyketide transferase af380 family.</text>
</comment>
<organism>
    <name type="scientific">Aspergillus calidoustus</name>
    <dbReference type="NCBI Taxonomy" id="454130"/>
    <lineage>
        <taxon>Eukaryota</taxon>
        <taxon>Fungi</taxon>
        <taxon>Dikarya</taxon>
        <taxon>Ascomycota</taxon>
        <taxon>Pezizomycotina</taxon>
        <taxon>Eurotiomycetes</taxon>
        <taxon>Eurotiomycetidae</taxon>
        <taxon>Eurotiales</taxon>
        <taxon>Aspergillaceae</taxon>
        <taxon>Aspergillus</taxon>
        <taxon>Aspergillus subgen. Nidulantes</taxon>
    </lineage>
</organism>
<sequence length="308" mass="34562">MSFAFSKVEFEEVEFQTLDKLTLKARLYSAAKRGPALVMNPGYNCTKEISAPSAAAYFQSKGITCLIYDPRNCGQSDGTPRREIDPHRQVDDYLDAMTYMSGLDIVDPDQIGFWGVSFSASIALAAACYDPRAKCIITVSPWTFDFGITAAEAKDNFSRLVAEREAQALGNEPFYTAMVDEEGNNPIHVNVDWGDEVRAAVNEFVSLSADGFVPTVTFQSYYKLFTFSPYLSLKFLGDTPLMMVVPEHDTVCPVEQQVKLYDAVEGPKEIYHAEGKRHLNMLAEDKFFEPMMKPQVEFFFKVMRGEAI</sequence>
<keyword id="KW-1185">Reference proteome</keyword>
<keyword id="KW-0808">Transferase</keyword>
<feature type="chain" id="PRO_0000454534" description="Acyltransferase drtE">
    <location>
        <begin position="1"/>
        <end position="308"/>
    </location>
</feature>
<feature type="domain" description="AB hydrolase-1" evidence="1">
    <location>
        <begin position="35"/>
        <end position="159"/>
    </location>
</feature>
<gene>
    <name evidence="3" type="primary">drtE</name>
    <name type="ORF">ASPCAL02981</name>
</gene>